<dbReference type="EMBL" id="AE000657">
    <property type="protein sequence ID" value="AAC07791.1"/>
    <property type="molecule type" value="Genomic_DNA"/>
</dbReference>
<dbReference type="PIR" id="A70475">
    <property type="entry name" value="A70475"/>
</dbReference>
<dbReference type="RefSeq" id="NP_214398.1">
    <property type="nucleotide sequence ID" value="NC_000918.1"/>
</dbReference>
<dbReference type="RefSeq" id="WP_010881334.1">
    <property type="nucleotide sequence ID" value="NC_000918.1"/>
</dbReference>
<dbReference type="SMR" id="O67829"/>
<dbReference type="FunCoup" id="O67829">
    <property type="interactions" value="346"/>
</dbReference>
<dbReference type="STRING" id="224324.aq_2041"/>
<dbReference type="EnsemblBacteria" id="AAC07791">
    <property type="protein sequence ID" value="AAC07791"/>
    <property type="gene ID" value="aq_2041"/>
</dbReference>
<dbReference type="KEGG" id="aae:aq_2041"/>
<dbReference type="PATRIC" id="fig|224324.8.peg.1575"/>
<dbReference type="eggNOG" id="COG0224">
    <property type="taxonomic scope" value="Bacteria"/>
</dbReference>
<dbReference type="HOGENOM" id="CLU_050669_0_1_0"/>
<dbReference type="InParanoid" id="O67829"/>
<dbReference type="OrthoDB" id="9812769at2"/>
<dbReference type="Proteomes" id="UP000000798">
    <property type="component" value="Chromosome"/>
</dbReference>
<dbReference type="GO" id="GO:0005886">
    <property type="term" value="C:plasma membrane"/>
    <property type="evidence" value="ECO:0007669"/>
    <property type="project" value="UniProtKB-SubCell"/>
</dbReference>
<dbReference type="GO" id="GO:0045259">
    <property type="term" value="C:proton-transporting ATP synthase complex"/>
    <property type="evidence" value="ECO:0007669"/>
    <property type="project" value="UniProtKB-KW"/>
</dbReference>
<dbReference type="GO" id="GO:0005524">
    <property type="term" value="F:ATP binding"/>
    <property type="evidence" value="ECO:0007669"/>
    <property type="project" value="UniProtKB-UniRule"/>
</dbReference>
<dbReference type="GO" id="GO:0046933">
    <property type="term" value="F:proton-transporting ATP synthase activity, rotational mechanism"/>
    <property type="evidence" value="ECO:0007669"/>
    <property type="project" value="UniProtKB-UniRule"/>
</dbReference>
<dbReference type="GO" id="GO:0015986">
    <property type="term" value="P:proton motive force-driven ATP synthesis"/>
    <property type="evidence" value="ECO:0000318"/>
    <property type="project" value="GO_Central"/>
</dbReference>
<dbReference type="GO" id="GO:0042777">
    <property type="term" value="P:proton motive force-driven plasma membrane ATP synthesis"/>
    <property type="evidence" value="ECO:0007669"/>
    <property type="project" value="UniProtKB-UniRule"/>
</dbReference>
<dbReference type="CDD" id="cd12151">
    <property type="entry name" value="F1-ATPase_gamma"/>
    <property type="match status" value="1"/>
</dbReference>
<dbReference type="Gene3D" id="3.40.1380.10">
    <property type="match status" value="1"/>
</dbReference>
<dbReference type="Gene3D" id="1.10.287.80">
    <property type="entry name" value="ATP synthase, gamma subunit, helix hairpin domain"/>
    <property type="match status" value="1"/>
</dbReference>
<dbReference type="HAMAP" id="MF_00815">
    <property type="entry name" value="ATP_synth_gamma_bact"/>
    <property type="match status" value="1"/>
</dbReference>
<dbReference type="InterPro" id="IPR035968">
    <property type="entry name" value="ATP_synth_F1_ATPase_gsu"/>
</dbReference>
<dbReference type="InterPro" id="IPR000131">
    <property type="entry name" value="ATP_synth_F1_gsu"/>
</dbReference>
<dbReference type="NCBIfam" id="TIGR01146">
    <property type="entry name" value="ATPsyn_F1gamma"/>
    <property type="match status" value="1"/>
</dbReference>
<dbReference type="NCBIfam" id="NF010708">
    <property type="entry name" value="PRK14110.1"/>
    <property type="match status" value="1"/>
</dbReference>
<dbReference type="PANTHER" id="PTHR11693">
    <property type="entry name" value="ATP SYNTHASE GAMMA CHAIN"/>
    <property type="match status" value="1"/>
</dbReference>
<dbReference type="PANTHER" id="PTHR11693:SF22">
    <property type="entry name" value="ATP SYNTHASE SUBUNIT GAMMA, MITOCHONDRIAL"/>
    <property type="match status" value="1"/>
</dbReference>
<dbReference type="Pfam" id="PF00231">
    <property type="entry name" value="ATP-synt"/>
    <property type="match status" value="1"/>
</dbReference>
<dbReference type="PRINTS" id="PR00126">
    <property type="entry name" value="ATPASEGAMMA"/>
</dbReference>
<dbReference type="SUPFAM" id="SSF52943">
    <property type="entry name" value="ATP synthase (F1-ATPase), gamma subunit"/>
    <property type="match status" value="1"/>
</dbReference>
<reference key="1">
    <citation type="journal article" date="1998" name="Nature">
        <title>The complete genome of the hyperthermophilic bacterium Aquifex aeolicus.</title>
        <authorList>
            <person name="Deckert G."/>
            <person name="Warren P.V."/>
            <person name="Gaasterland T."/>
            <person name="Young W.G."/>
            <person name="Lenox A.L."/>
            <person name="Graham D.E."/>
            <person name="Overbeek R."/>
            <person name="Snead M.A."/>
            <person name="Keller M."/>
            <person name="Aujay M."/>
            <person name="Huber R."/>
            <person name="Feldman R.A."/>
            <person name="Short J.M."/>
            <person name="Olsen G.J."/>
            <person name="Swanson R.V."/>
        </authorList>
    </citation>
    <scope>NUCLEOTIDE SEQUENCE [LARGE SCALE GENOMIC DNA]</scope>
    <source>
        <strain>VF5</strain>
    </source>
</reference>
<proteinExistence type="inferred from homology"/>
<sequence length="291" mass="33551">MAKLSPRDIKRKIQGIKNTKRITNAMKVVSAAKLRKAQELVYASRPYSEKLYELVGHLAAHVDTEDNPLFDVREERNVDVILVTADRGLAGAFNSNVIRTAENLIREKEEKGVKVSLILVGRKGFQYFTKRGYNVIKGYDEVFRKTVNFNVAKEVAEIVKERFLNGETDRVYLINNEMVTRASYKPQVRVFLPFEAQEKEVEELGTYEFEVSEEEFFDYIVNLYLNYQVYRAMVESNAAEHFARMIAMDNATKNAEDLIRQWTLVFNKARQEAITTELIDITNAVEALKAQ</sequence>
<name>ATPG_AQUAE</name>
<organism>
    <name type="scientific">Aquifex aeolicus (strain VF5)</name>
    <dbReference type="NCBI Taxonomy" id="224324"/>
    <lineage>
        <taxon>Bacteria</taxon>
        <taxon>Pseudomonadati</taxon>
        <taxon>Aquificota</taxon>
        <taxon>Aquificia</taxon>
        <taxon>Aquificales</taxon>
        <taxon>Aquificaceae</taxon>
        <taxon>Aquifex</taxon>
    </lineage>
</organism>
<evidence type="ECO:0000255" key="1">
    <source>
        <dbReference type="HAMAP-Rule" id="MF_00815"/>
    </source>
</evidence>
<keyword id="KW-0066">ATP synthesis</keyword>
<keyword id="KW-0997">Cell inner membrane</keyword>
<keyword id="KW-1003">Cell membrane</keyword>
<keyword id="KW-0139">CF(1)</keyword>
<keyword id="KW-0375">Hydrogen ion transport</keyword>
<keyword id="KW-0406">Ion transport</keyword>
<keyword id="KW-0472">Membrane</keyword>
<keyword id="KW-1185">Reference proteome</keyword>
<keyword id="KW-0813">Transport</keyword>
<gene>
    <name evidence="1" type="primary">atpG</name>
    <name type="ordered locus">aq_2041</name>
</gene>
<comment type="function">
    <text evidence="1">Produces ATP from ADP in the presence of a proton gradient across the membrane. The gamma chain is believed to be important in regulating ATPase activity and the flow of protons through the CF(0) complex.</text>
</comment>
<comment type="subunit">
    <text evidence="1">F-type ATPases have 2 components, CF(1) - the catalytic core - and CF(0) - the membrane proton channel. CF(1) has five subunits: alpha(3), beta(3), gamma(1), delta(1), epsilon(1). CF(0) has three main subunits: a, b and c.</text>
</comment>
<comment type="subcellular location">
    <subcellularLocation>
        <location evidence="1">Cell inner membrane</location>
        <topology evidence="1">Peripheral membrane protein</topology>
    </subcellularLocation>
</comment>
<comment type="similarity">
    <text evidence="1">Belongs to the ATPase gamma chain family.</text>
</comment>
<protein>
    <recommendedName>
        <fullName evidence="1">ATP synthase gamma chain</fullName>
    </recommendedName>
    <alternativeName>
        <fullName evidence="1">ATP synthase F1 sector gamma subunit</fullName>
    </alternativeName>
    <alternativeName>
        <fullName evidence="1">F-ATPase gamma subunit</fullName>
    </alternativeName>
</protein>
<accession>O67829</accession>
<feature type="chain" id="PRO_0000073221" description="ATP synthase gamma chain">
    <location>
        <begin position="1"/>
        <end position="291"/>
    </location>
</feature>